<dbReference type="EC" id="2.7.7.6"/>
<dbReference type="EMBL" id="AAFI02000030">
    <property type="protein sequence ID" value="EAL67745.1"/>
    <property type="molecule type" value="Genomic_DNA"/>
</dbReference>
<dbReference type="EMBL" id="S52651">
    <property type="protein sequence ID" value="AAB24966.1"/>
    <property type="molecule type" value="mRNA"/>
</dbReference>
<dbReference type="PIR" id="A56823">
    <property type="entry name" value="A56823"/>
</dbReference>
<dbReference type="RefSeq" id="XP_641735.1">
    <property type="nucleotide sequence ID" value="XM_636643.1"/>
</dbReference>
<dbReference type="SMR" id="P35084"/>
<dbReference type="FunCoup" id="P35084">
    <property type="interactions" value="784"/>
</dbReference>
<dbReference type="STRING" id="44689.P35084"/>
<dbReference type="PaxDb" id="44689-DDB0215406"/>
<dbReference type="EnsemblProtists" id="EAL67745">
    <property type="protein sequence ID" value="EAL67745"/>
    <property type="gene ID" value="DDB_G0279193"/>
</dbReference>
<dbReference type="GeneID" id="8621932"/>
<dbReference type="KEGG" id="ddi:DDB_G0279193"/>
<dbReference type="dictyBase" id="DDB_G0279193">
    <property type="gene designation" value="rpb1"/>
</dbReference>
<dbReference type="VEuPathDB" id="AmoebaDB:DDB_G0279193"/>
<dbReference type="eggNOG" id="KOG0260">
    <property type="taxonomic scope" value="Eukaryota"/>
</dbReference>
<dbReference type="HOGENOM" id="CLU_000487_3_0_1"/>
<dbReference type="InParanoid" id="P35084"/>
<dbReference type="OMA" id="KPCMGIV"/>
<dbReference type="PhylomeDB" id="P35084"/>
<dbReference type="Reactome" id="R-DDI-113418">
    <property type="pathway name" value="Formation of the Early Elongation Complex"/>
</dbReference>
<dbReference type="Reactome" id="R-DDI-674695">
    <property type="pathway name" value="RNA Polymerase II Pre-transcription Events"/>
</dbReference>
<dbReference type="Reactome" id="R-DDI-6781823">
    <property type="pathway name" value="Formation of TC-NER Pre-Incision Complex"/>
</dbReference>
<dbReference type="Reactome" id="R-DDI-6782135">
    <property type="pathway name" value="Dual incision in TC-NER"/>
</dbReference>
<dbReference type="Reactome" id="R-DDI-6782210">
    <property type="pathway name" value="Gap-filling DNA repair synthesis and ligation in TC-NER"/>
</dbReference>
<dbReference type="Reactome" id="R-DDI-6796648">
    <property type="pathway name" value="TP53 Regulates Transcription of DNA Repair Genes"/>
</dbReference>
<dbReference type="Reactome" id="R-DDI-6807505">
    <property type="pathway name" value="RNA polymerase II transcribes snRNA genes"/>
</dbReference>
<dbReference type="Reactome" id="R-DDI-72086">
    <property type="pathway name" value="mRNA Capping"/>
</dbReference>
<dbReference type="Reactome" id="R-DDI-72163">
    <property type="pathway name" value="mRNA Splicing - Major Pathway"/>
</dbReference>
<dbReference type="Reactome" id="R-DDI-72203">
    <property type="pathway name" value="Processing of Capped Intron-Containing Pre-mRNA"/>
</dbReference>
<dbReference type="Reactome" id="R-DDI-73776">
    <property type="pathway name" value="RNA Polymerase II Promoter Escape"/>
</dbReference>
<dbReference type="Reactome" id="R-DDI-73779">
    <property type="pathway name" value="RNA Polymerase II Transcription Pre-Initiation And Promoter Opening"/>
</dbReference>
<dbReference type="Reactome" id="R-DDI-75953">
    <property type="pathway name" value="RNA Polymerase II Transcription Initiation"/>
</dbReference>
<dbReference type="Reactome" id="R-DDI-76042">
    <property type="pathway name" value="RNA Polymerase II Transcription Initiation And Promoter Clearance"/>
</dbReference>
<dbReference type="Reactome" id="R-DDI-77075">
    <property type="pathway name" value="RNA Pol II CTD phosphorylation and interaction with CE"/>
</dbReference>
<dbReference type="Reactome" id="R-DDI-9018519">
    <property type="pathway name" value="Estrogen-dependent gene expression"/>
</dbReference>
<dbReference type="PRO" id="PR:P35084"/>
<dbReference type="Proteomes" id="UP000002195">
    <property type="component" value="Chromosome 3"/>
</dbReference>
<dbReference type="GO" id="GO:0005739">
    <property type="term" value="C:mitochondrion"/>
    <property type="evidence" value="ECO:0007669"/>
    <property type="project" value="GOC"/>
</dbReference>
<dbReference type="GO" id="GO:0005634">
    <property type="term" value="C:nucleus"/>
    <property type="evidence" value="ECO:0000314"/>
    <property type="project" value="dictyBase"/>
</dbReference>
<dbReference type="GO" id="GO:0005665">
    <property type="term" value="C:RNA polymerase II, core complex"/>
    <property type="evidence" value="ECO:0000250"/>
    <property type="project" value="dictyBase"/>
</dbReference>
<dbReference type="GO" id="GO:0003677">
    <property type="term" value="F:DNA binding"/>
    <property type="evidence" value="ECO:0007669"/>
    <property type="project" value="UniProtKB-KW"/>
</dbReference>
<dbReference type="GO" id="GO:0003899">
    <property type="term" value="F:DNA-directed RNA polymerase activity"/>
    <property type="evidence" value="ECO:0000250"/>
    <property type="project" value="dictyBase"/>
</dbReference>
<dbReference type="GO" id="GO:0046872">
    <property type="term" value="F:metal ion binding"/>
    <property type="evidence" value="ECO:0007669"/>
    <property type="project" value="UniProtKB-KW"/>
</dbReference>
<dbReference type="GO" id="GO:0006366">
    <property type="term" value="P:transcription by RNA polymerase II"/>
    <property type="evidence" value="ECO:0007669"/>
    <property type="project" value="InterPro"/>
</dbReference>
<dbReference type="CDD" id="cd02584">
    <property type="entry name" value="RNAP_II_Rpb1_C"/>
    <property type="match status" value="1"/>
</dbReference>
<dbReference type="CDD" id="cd02733">
    <property type="entry name" value="RNAP_II_RPB1_N"/>
    <property type="match status" value="1"/>
</dbReference>
<dbReference type="FunFam" id="2.40.40.20:FF:000019">
    <property type="entry name" value="DNA-directed RNA polymerase II subunit RPB1"/>
    <property type="match status" value="1"/>
</dbReference>
<dbReference type="FunFam" id="1.10.132.30:FF:000001">
    <property type="entry name" value="DNA-directed RNA polymerase subunit"/>
    <property type="match status" value="1"/>
</dbReference>
<dbReference type="FunFam" id="1.10.150.390:FF:000001">
    <property type="entry name" value="DNA-directed RNA polymerase subunit"/>
    <property type="match status" value="1"/>
</dbReference>
<dbReference type="FunFam" id="1.10.274.100:FF:000001">
    <property type="entry name" value="DNA-directed RNA polymerase subunit"/>
    <property type="match status" value="1"/>
</dbReference>
<dbReference type="FunFam" id="3.30.1360.140:FF:000001">
    <property type="entry name" value="DNA-directed RNA polymerase subunit"/>
    <property type="match status" value="1"/>
</dbReference>
<dbReference type="FunFam" id="3.30.1490.180:FF:000001">
    <property type="entry name" value="DNA-directed RNA polymerase subunit"/>
    <property type="match status" value="1"/>
</dbReference>
<dbReference type="FunFam" id="4.10.860.120:FF:000002">
    <property type="entry name" value="DNA-directed RNA polymerase subunit"/>
    <property type="match status" value="1"/>
</dbReference>
<dbReference type="FunFam" id="4.10.860.120:FF:000003">
    <property type="entry name" value="DNA-directed RNA polymerase subunit"/>
    <property type="match status" value="1"/>
</dbReference>
<dbReference type="Gene3D" id="1.10.132.30">
    <property type="match status" value="1"/>
</dbReference>
<dbReference type="Gene3D" id="1.10.150.390">
    <property type="match status" value="1"/>
</dbReference>
<dbReference type="Gene3D" id="2.40.40.20">
    <property type="match status" value="1"/>
</dbReference>
<dbReference type="Gene3D" id="3.30.1360.140">
    <property type="match status" value="1"/>
</dbReference>
<dbReference type="Gene3D" id="6.10.250.2940">
    <property type="match status" value="1"/>
</dbReference>
<dbReference type="Gene3D" id="6.20.50.80">
    <property type="match status" value="1"/>
</dbReference>
<dbReference type="Gene3D" id="3.30.1490.180">
    <property type="entry name" value="RNA polymerase ii"/>
    <property type="match status" value="1"/>
</dbReference>
<dbReference type="Gene3D" id="4.10.860.120">
    <property type="entry name" value="RNA polymerase II, clamp domain"/>
    <property type="match status" value="2"/>
</dbReference>
<dbReference type="Gene3D" id="1.10.274.100">
    <property type="entry name" value="RNA polymerase Rpb1, domain 3"/>
    <property type="match status" value="1"/>
</dbReference>
<dbReference type="InterPro" id="IPR045867">
    <property type="entry name" value="DNA-dir_RpoC_beta_prime"/>
</dbReference>
<dbReference type="InterPro" id="IPR000722">
    <property type="entry name" value="RNA_pol_asu"/>
</dbReference>
<dbReference type="InterPro" id="IPR000684">
    <property type="entry name" value="RNA_pol_II_repeat_euk"/>
</dbReference>
<dbReference type="InterPro" id="IPR006592">
    <property type="entry name" value="RNA_pol_N"/>
</dbReference>
<dbReference type="InterPro" id="IPR007080">
    <property type="entry name" value="RNA_pol_Rpb1_1"/>
</dbReference>
<dbReference type="InterPro" id="IPR007066">
    <property type="entry name" value="RNA_pol_Rpb1_3"/>
</dbReference>
<dbReference type="InterPro" id="IPR042102">
    <property type="entry name" value="RNA_pol_Rpb1_3_sf"/>
</dbReference>
<dbReference type="InterPro" id="IPR007083">
    <property type="entry name" value="RNA_pol_Rpb1_4"/>
</dbReference>
<dbReference type="InterPro" id="IPR007081">
    <property type="entry name" value="RNA_pol_Rpb1_5"/>
</dbReference>
<dbReference type="InterPro" id="IPR007075">
    <property type="entry name" value="RNA_pol_Rpb1_6"/>
</dbReference>
<dbReference type="InterPro" id="IPR007073">
    <property type="entry name" value="RNA_pol_Rpb1_7"/>
</dbReference>
<dbReference type="InterPro" id="IPR038593">
    <property type="entry name" value="RNA_pol_Rpb1_7_sf"/>
</dbReference>
<dbReference type="InterPro" id="IPR044893">
    <property type="entry name" value="RNA_pol_Rpb1_clamp_domain"/>
</dbReference>
<dbReference type="InterPro" id="IPR038120">
    <property type="entry name" value="Rpb1_funnel_sf"/>
</dbReference>
<dbReference type="NCBIfam" id="NF006336">
    <property type="entry name" value="PRK08566.1"/>
    <property type="match status" value="1"/>
</dbReference>
<dbReference type="PANTHER" id="PTHR19376">
    <property type="entry name" value="DNA-DIRECTED RNA POLYMERASE"/>
    <property type="match status" value="1"/>
</dbReference>
<dbReference type="PANTHER" id="PTHR19376:SF37">
    <property type="entry name" value="DNA-DIRECTED RNA POLYMERASE II SUBUNIT RPB1"/>
    <property type="match status" value="1"/>
</dbReference>
<dbReference type="Pfam" id="PF04997">
    <property type="entry name" value="RNA_pol_Rpb1_1"/>
    <property type="match status" value="1"/>
</dbReference>
<dbReference type="Pfam" id="PF00623">
    <property type="entry name" value="RNA_pol_Rpb1_2"/>
    <property type="match status" value="1"/>
</dbReference>
<dbReference type="Pfam" id="PF04983">
    <property type="entry name" value="RNA_pol_Rpb1_3"/>
    <property type="match status" value="1"/>
</dbReference>
<dbReference type="Pfam" id="PF05000">
    <property type="entry name" value="RNA_pol_Rpb1_4"/>
    <property type="match status" value="1"/>
</dbReference>
<dbReference type="Pfam" id="PF04998">
    <property type="entry name" value="RNA_pol_Rpb1_5"/>
    <property type="match status" value="1"/>
</dbReference>
<dbReference type="Pfam" id="PF04992">
    <property type="entry name" value="RNA_pol_Rpb1_6"/>
    <property type="match status" value="1"/>
</dbReference>
<dbReference type="Pfam" id="PF04990">
    <property type="entry name" value="RNA_pol_Rpb1_7"/>
    <property type="match status" value="1"/>
</dbReference>
<dbReference type="Pfam" id="PF05001">
    <property type="entry name" value="RNA_pol_Rpb1_R"/>
    <property type="match status" value="10"/>
</dbReference>
<dbReference type="PRINTS" id="PR01217">
    <property type="entry name" value="PRICHEXTENSN"/>
</dbReference>
<dbReference type="SMART" id="SM00663">
    <property type="entry name" value="RPOLA_N"/>
    <property type="match status" value="1"/>
</dbReference>
<dbReference type="SUPFAM" id="SSF64484">
    <property type="entry name" value="beta and beta-prime subunits of DNA dependent RNA-polymerase"/>
    <property type="match status" value="1"/>
</dbReference>
<dbReference type="PROSITE" id="PS00115">
    <property type="entry name" value="RNA_POL_II_REPEAT"/>
    <property type="match status" value="22"/>
</dbReference>
<accession>P35084</accession>
<accession>Q54X42</accession>
<sequence length="1727" mass="192740">MAAFFPPSSAELRKVKRVQFGILSPDEIRNMSVARVEHPETYENGKPKAGGLLDPAMGTIDKTQRCQTCSGTMAECPGHFGHIELAKPVFHIGFIDTVLKILRCVCYHCSKLLTDTNEHSFRQALKIRNQKHRLNAVVDCCKNKKVCAIGGEEEEEHDLSKTDEELDKPVKHGGCGNVLPKITKEDLKIIVEFKDVTDESIEKKSVLSAERVLNILKRIKDEDSRAMGINPDWARADWMIATVLPVPPPPVRPSIMMDTSTRGEDDLTHKLADIVKANRELQRQEKNGAPAHIIAEATQFLQFHVATYVDNEIPGLPQAQQRSGRPLKSIRQRLKGKEGRIRGNLMGKRVDFSARTVITADPNLSIDQVGVPRSIALNLTYPETVTPFNIDKMRELIRNGPSEHPGAKYIIREDGTRFDLRFVKKVSDTHLECGYKVERHINDGDVVIFNRQPSLHKMSMMGHRIKVMPYSTFRLNLSVTSPYNADFDGDEMNLHVPQTLETRAEVIEIMMVPRQIVSPQSNRPVMGIVQDTLLGSRLFTKRDCFMEKDLVMNILMWLPSWDGKVPPPAILKPKQLWTGKQLFSLIIPDINLIRFTSTHNDKEPNECSAGDTRVIIERGELLAGILCKRSLGAANGSIIHVVMNEHGHDTCRLFIDQTQTVVNHWLINRGFTMGIGDTIADSATMAKVTLTISSAKNQVKELIIKAQNKQFECQPGKSVIETFEQKVNQVLNKARDTAGSSAQDSLSEDNNLKAMVTAGSKGSFINISQMMACVGQQNVEGKRIPFGFQSRTLPHFTKDDYGPESRGFVENSYLRGLTPQEFFFHAMGGREGLIDTAVKTSETGYIQRRLVKAMEDVSIKYDATVRNSLGDVIQFAYGEDGIDGCFVENQSIDSLRKDNTELERMYRHQVDKPDYGDGWMDPLVIEHVRNDSLTRDTLEKEFERIKSDRSLLRNEIIPSGEANWPLPVNLRRLINNAQKLFNIDIRRVSDLNPAVVVLEIEKLVARLKIIATADTTEDDENFNRAWAEVYFNATMLFSILVRSTFASKRVLTEFRLTEKAFLWVCGEIESKFLQALAHPGEMVGALAAQSIGEPATQMTLNTFHYAGVSSKNVTLGVPRLKEIINIAKQVKTPSLTIYLKPHMARDMDRAKIVKSQLEYTTLANVTSATEIYYDPDPQNTIISEDAEFVNSYFELPDEEIDVHSMSPWLLRIELDRGMVTDKKLTMADITQCVVRDFGLSLNCIFSDDNAEKLILRIRMVESQETKGTDNDDDDQFLRRIESNMLSEMVLRGIKGIKKVFMRTDDKIPKVTENGGFGVREEWILDTDGVSLLEVMSHPDVDHTRTTSNDIVEIIQVLGIEAVRNALLKELRAVISFDGSYVNYRHLAILADVMTYRGHLMAITRHGINRVETGPLMRCSFEETVEILMDAAMFSETDDVKGVTENIILGQLPPLGTGSFEVFLNQDMIKNAHSIALPEPSNVSYPDTPGSQTPSYSYGDGSTTPFHNPYDAPLSPFNETFRGDFSPSAMNSPGYNANKSYGSSYQYFPQSPTYSPTSPSYSPTSPSYSPTSPSYSPTSPSYSPTSPSYSPTSPSYSPTSPFYSPTSPSYSPTSPSYSPTSPSYSPTSPSYSPTSPSYSPTSPSYSPTSPSYSPTSPSYSPTSPSYSPTSPSYSPTSPSYSPTSPSYSPSSPSYSPSSPSYSPSSPSYSPSSPTFTNKYNYQPNNKKK</sequence>
<gene>
    <name type="primary">polr2a</name>
    <name type="synonym">rpb1</name>
    <name type="synonym">rpoA</name>
    <name type="ORF">DDB_G0279193</name>
</gene>
<organism>
    <name type="scientific">Dictyostelium discoideum</name>
    <name type="common">Social amoeba</name>
    <dbReference type="NCBI Taxonomy" id="44689"/>
    <lineage>
        <taxon>Eukaryota</taxon>
        <taxon>Amoebozoa</taxon>
        <taxon>Evosea</taxon>
        <taxon>Eumycetozoa</taxon>
        <taxon>Dictyostelia</taxon>
        <taxon>Dictyosteliales</taxon>
        <taxon>Dictyosteliaceae</taxon>
        <taxon>Dictyostelium</taxon>
    </lineage>
</organism>
<name>RPB1_DICDI</name>
<proteinExistence type="evidence at transcript level"/>
<reference key="1">
    <citation type="journal article" date="2005" name="Nature">
        <title>The genome of the social amoeba Dictyostelium discoideum.</title>
        <authorList>
            <person name="Eichinger L."/>
            <person name="Pachebat J.A."/>
            <person name="Gloeckner G."/>
            <person name="Rajandream M.A."/>
            <person name="Sucgang R."/>
            <person name="Berriman M."/>
            <person name="Song J."/>
            <person name="Olsen R."/>
            <person name="Szafranski K."/>
            <person name="Xu Q."/>
            <person name="Tunggal B."/>
            <person name="Kummerfeld S."/>
            <person name="Madera M."/>
            <person name="Konfortov B.A."/>
            <person name="Rivero F."/>
            <person name="Bankier A.T."/>
            <person name="Lehmann R."/>
            <person name="Hamlin N."/>
            <person name="Davies R."/>
            <person name="Gaudet P."/>
            <person name="Fey P."/>
            <person name="Pilcher K."/>
            <person name="Chen G."/>
            <person name="Saunders D."/>
            <person name="Sodergren E.J."/>
            <person name="Davis P."/>
            <person name="Kerhornou A."/>
            <person name="Nie X."/>
            <person name="Hall N."/>
            <person name="Anjard C."/>
            <person name="Hemphill L."/>
            <person name="Bason N."/>
            <person name="Farbrother P."/>
            <person name="Desany B."/>
            <person name="Just E."/>
            <person name="Morio T."/>
            <person name="Rost R."/>
            <person name="Churcher C.M."/>
            <person name="Cooper J."/>
            <person name="Haydock S."/>
            <person name="van Driessche N."/>
            <person name="Cronin A."/>
            <person name="Goodhead I."/>
            <person name="Muzny D.M."/>
            <person name="Mourier T."/>
            <person name="Pain A."/>
            <person name="Lu M."/>
            <person name="Harper D."/>
            <person name="Lindsay R."/>
            <person name="Hauser H."/>
            <person name="James K.D."/>
            <person name="Quiles M."/>
            <person name="Madan Babu M."/>
            <person name="Saito T."/>
            <person name="Buchrieser C."/>
            <person name="Wardroper A."/>
            <person name="Felder M."/>
            <person name="Thangavelu M."/>
            <person name="Johnson D."/>
            <person name="Knights A."/>
            <person name="Loulseged H."/>
            <person name="Mungall K.L."/>
            <person name="Oliver K."/>
            <person name="Price C."/>
            <person name="Quail M.A."/>
            <person name="Urushihara H."/>
            <person name="Hernandez J."/>
            <person name="Rabbinowitsch E."/>
            <person name="Steffen D."/>
            <person name="Sanders M."/>
            <person name="Ma J."/>
            <person name="Kohara Y."/>
            <person name="Sharp S."/>
            <person name="Simmonds M.N."/>
            <person name="Spiegler S."/>
            <person name="Tivey A."/>
            <person name="Sugano S."/>
            <person name="White B."/>
            <person name="Walker D."/>
            <person name="Woodward J.R."/>
            <person name="Winckler T."/>
            <person name="Tanaka Y."/>
            <person name="Shaulsky G."/>
            <person name="Schleicher M."/>
            <person name="Weinstock G.M."/>
            <person name="Rosenthal A."/>
            <person name="Cox E.C."/>
            <person name="Chisholm R.L."/>
            <person name="Gibbs R.A."/>
            <person name="Loomis W.F."/>
            <person name="Platzer M."/>
            <person name="Kay R.R."/>
            <person name="Williams J.G."/>
            <person name="Dear P.H."/>
            <person name="Noegel A.A."/>
            <person name="Barrell B.G."/>
            <person name="Kuspa A."/>
        </authorList>
    </citation>
    <scope>NUCLEOTIDE SEQUENCE [LARGE SCALE GENOMIC DNA]</scope>
    <source>
        <strain>AX4</strain>
    </source>
</reference>
<reference key="2">
    <citation type="journal article" date="1992" name="Biochem. Cell Biol.">
        <title>The largest subunit of RNA polymerase II in Dictyostelium: conservation of the unique tail domain and gene expression.</title>
        <authorList>
            <person name="Lam T.Y."/>
            <person name="Chan L."/>
            <person name="Yip P."/>
            <person name="Siu C.H."/>
        </authorList>
    </citation>
    <scope>NUCLEOTIDE SEQUENCE [MRNA] OF 826-1727</scope>
</reference>
<keyword id="KW-0238">DNA-binding</keyword>
<keyword id="KW-0240">DNA-directed RNA polymerase</keyword>
<keyword id="KW-1017">Isopeptide bond</keyword>
<keyword id="KW-0460">Magnesium</keyword>
<keyword id="KW-0479">Metal-binding</keyword>
<keyword id="KW-0548">Nucleotidyltransferase</keyword>
<keyword id="KW-0539">Nucleus</keyword>
<keyword id="KW-0597">Phosphoprotein</keyword>
<keyword id="KW-1185">Reference proteome</keyword>
<keyword id="KW-0677">Repeat</keyword>
<keyword id="KW-0804">Transcription</keyword>
<keyword id="KW-0808">Transferase</keyword>
<keyword id="KW-0832">Ubl conjugation</keyword>
<keyword id="KW-0862">Zinc</keyword>
<feature type="chain" id="PRO_0000073936" description="DNA-directed RNA polymerase II subunit rpb1">
    <location>
        <begin position="1"/>
        <end position="1727"/>
    </location>
</feature>
<feature type="repeat" description="1">
    <location>
        <begin position="1553"/>
        <end position="1559"/>
    </location>
</feature>
<feature type="repeat" description="2">
    <location>
        <begin position="1560"/>
        <end position="1566"/>
    </location>
</feature>
<feature type="repeat" description="3">
    <location>
        <begin position="1567"/>
        <end position="1573"/>
    </location>
</feature>
<feature type="repeat" description="4">
    <location>
        <begin position="1574"/>
        <end position="1580"/>
    </location>
</feature>
<feature type="repeat" description="5">
    <location>
        <begin position="1581"/>
        <end position="1587"/>
    </location>
</feature>
<feature type="repeat" description="6">
    <location>
        <begin position="1588"/>
        <end position="1594"/>
    </location>
</feature>
<feature type="repeat" description="7">
    <location>
        <begin position="1595"/>
        <end position="1601"/>
    </location>
</feature>
<feature type="repeat" description="8">
    <location>
        <begin position="1602"/>
        <end position="1608"/>
    </location>
</feature>
<feature type="repeat" description="9">
    <location>
        <begin position="1609"/>
        <end position="1615"/>
    </location>
</feature>
<feature type="repeat" description="10">
    <location>
        <begin position="1616"/>
        <end position="1622"/>
    </location>
</feature>
<feature type="repeat" description="11">
    <location>
        <begin position="1623"/>
        <end position="1629"/>
    </location>
</feature>
<feature type="repeat" description="12">
    <location>
        <begin position="1630"/>
        <end position="1636"/>
    </location>
</feature>
<feature type="repeat" description="13">
    <location>
        <begin position="1637"/>
        <end position="1643"/>
    </location>
</feature>
<feature type="repeat" description="14">
    <location>
        <begin position="1644"/>
        <end position="1650"/>
    </location>
</feature>
<feature type="repeat" description="15">
    <location>
        <begin position="1651"/>
        <end position="1657"/>
    </location>
</feature>
<feature type="repeat" description="16">
    <location>
        <begin position="1658"/>
        <end position="1664"/>
    </location>
</feature>
<feature type="repeat" description="17">
    <location>
        <begin position="1665"/>
        <end position="1671"/>
    </location>
</feature>
<feature type="repeat" description="18">
    <location>
        <begin position="1672"/>
        <end position="1678"/>
    </location>
</feature>
<feature type="repeat" description="19">
    <location>
        <begin position="1679"/>
        <end position="1685"/>
    </location>
</feature>
<feature type="repeat" description="20">
    <location>
        <begin position="1686"/>
        <end position="1692"/>
    </location>
</feature>
<feature type="repeat" description="21">
    <location>
        <begin position="1693"/>
        <end position="1699"/>
    </location>
</feature>
<feature type="repeat" description="22">
    <location>
        <begin position="1700"/>
        <end position="1706"/>
    </location>
</feature>
<feature type="repeat" description="23">
    <location>
        <begin position="1707"/>
        <end position="1713"/>
    </location>
</feature>
<feature type="region of interest" description="Bridging helix" evidence="1">
    <location>
        <begin position="819"/>
        <end position="831"/>
    </location>
</feature>
<feature type="region of interest" description="Disordered" evidence="5">
    <location>
        <begin position="1478"/>
        <end position="1512"/>
    </location>
</feature>
<feature type="region of interest" description="Disordered" evidence="5">
    <location>
        <begin position="1551"/>
        <end position="1727"/>
    </location>
</feature>
<feature type="region of interest" description="C-terminal domain (CTD); 23 X 7 AA tandem repeats of Y-S-P-[ST]-S-P-[FST]">
    <location>
        <begin position="1553"/>
        <end position="1713"/>
    </location>
</feature>
<feature type="compositionally biased region" description="Polar residues" evidence="5">
    <location>
        <begin position="1480"/>
        <end position="1505"/>
    </location>
</feature>
<feature type="binding site" evidence="2">
    <location>
        <position position="66"/>
    </location>
    <ligand>
        <name>Zn(2+)</name>
        <dbReference type="ChEBI" id="CHEBI:29105"/>
        <label>1</label>
    </ligand>
</feature>
<feature type="binding site" evidence="2">
    <location>
        <position position="69"/>
    </location>
    <ligand>
        <name>Zn(2+)</name>
        <dbReference type="ChEBI" id="CHEBI:29105"/>
        <label>1</label>
    </ligand>
</feature>
<feature type="binding site" evidence="2">
    <location>
        <position position="76"/>
    </location>
    <ligand>
        <name>Zn(2+)</name>
        <dbReference type="ChEBI" id="CHEBI:29105"/>
        <label>1</label>
    </ligand>
</feature>
<feature type="binding site" evidence="2">
    <location>
        <position position="79"/>
    </location>
    <ligand>
        <name>Zn(2+)</name>
        <dbReference type="ChEBI" id="CHEBI:29105"/>
        <label>1</label>
    </ligand>
</feature>
<feature type="binding site" evidence="2">
    <location>
        <position position="106"/>
    </location>
    <ligand>
        <name>Zn(2+)</name>
        <dbReference type="ChEBI" id="CHEBI:29105"/>
        <label>2</label>
    </ligand>
</feature>
<feature type="binding site" evidence="2">
    <location>
        <position position="109"/>
    </location>
    <ligand>
        <name>Zn(2+)</name>
        <dbReference type="ChEBI" id="CHEBI:29105"/>
        <label>2</label>
    </ligand>
</feature>
<feature type="binding site" evidence="2">
    <location>
        <position position="147"/>
    </location>
    <ligand>
        <name>Zn(2+)</name>
        <dbReference type="ChEBI" id="CHEBI:29105"/>
        <label>2</label>
    </ligand>
</feature>
<feature type="binding site" evidence="2">
    <location>
        <position position="175"/>
    </location>
    <ligand>
        <name>Zn(2+)</name>
        <dbReference type="ChEBI" id="CHEBI:29105"/>
        <label>2</label>
    </ligand>
</feature>
<feature type="binding site" evidence="2">
    <location>
        <position position="486"/>
    </location>
    <ligand>
        <name>Mg(2+)</name>
        <dbReference type="ChEBI" id="CHEBI:18420"/>
        <label>1</label>
        <note>catalytic</note>
    </ligand>
</feature>
<feature type="binding site" evidence="2">
    <location>
        <position position="486"/>
    </location>
    <ligand>
        <name>Mg(2+)</name>
        <dbReference type="ChEBI" id="CHEBI:18420"/>
        <label>2</label>
        <note>ligand shared with RPB2</note>
    </ligand>
</feature>
<feature type="binding site" evidence="2">
    <location>
        <position position="488"/>
    </location>
    <ligand>
        <name>Mg(2+)</name>
        <dbReference type="ChEBI" id="CHEBI:18420"/>
        <label>1</label>
        <note>catalytic</note>
    </ligand>
</feature>
<feature type="binding site" evidence="2">
    <location>
        <position position="488"/>
    </location>
    <ligand>
        <name>Mg(2+)</name>
        <dbReference type="ChEBI" id="CHEBI:18420"/>
        <label>2</label>
        <note>ligand shared with RPB2</note>
    </ligand>
</feature>
<feature type="binding site" evidence="2">
    <location>
        <position position="490"/>
    </location>
    <ligand>
        <name>Mg(2+)</name>
        <dbReference type="ChEBI" id="CHEBI:18420"/>
        <label>1</label>
        <note>catalytic</note>
    </ligand>
</feature>
<feature type="cross-link" description="Glycyl lysine isopeptide (Lys-Gly) (interchain with G-Cter in ubiquitin)" evidence="2">
    <location>
        <position position="1266"/>
    </location>
</feature>
<feature type="sequence conflict" description="In Ref. 2; AAB24966." evidence="6" ref="2">
    <original>R</original>
    <variation>C</variation>
    <location>
        <position position="849"/>
    </location>
</feature>
<feature type="sequence conflict" description="In Ref. 2; AAB24966." evidence="6" ref="2">
    <original>KE</original>
    <variation>NQ</variation>
    <location>
        <begin position="1121"/>
        <end position="1122"/>
    </location>
</feature>
<feature type="sequence conflict" description="In Ref. 2; AAB24966." evidence="6" ref="2">
    <original>D</original>
    <variation>E</variation>
    <location>
        <position position="1305"/>
    </location>
</feature>
<feature type="sequence conflict" description="In Ref. 2; AAB24966." evidence="6" ref="2">
    <original>G</original>
    <variation>S</variation>
    <location>
        <position position="1314"/>
    </location>
</feature>
<protein>
    <recommendedName>
        <fullName>DNA-directed RNA polymerase II subunit rpb1</fullName>
        <shortName>RNA polymerase II subunit B1</shortName>
        <ecNumber>2.7.7.6</ecNumber>
    </recommendedName>
    <alternativeName>
        <fullName>DNA-directed RNA polymerase III subunit A</fullName>
    </alternativeName>
</protein>
<evidence type="ECO:0000250" key="1"/>
<evidence type="ECO:0000250" key="2">
    <source>
        <dbReference type="UniProtKB" id="P04050"/>
    </source>
</evidence>
<evidence type="ECO:0000250" key="3">
    <source>
        <dbReference type="UniProtKB" id="P08775"/>
    </source>
</evidence>
<evidence type="ECO:0000250" key="4">
    <source>
        <dbReference type="UniProtKB" id="P24928"/>
    </source>
</evidence>
<evidence type="ECO:0000256" key="5">
    <source>
        <dbReference type="SAM" id="MobiDB-lite"/>
    </source>
</evidence>
<evidence type="ECO:0000305" key="6"/>
<comment type="function">
    <text evidence="1">DNA-dependent RNA polymerase catalyzes the transcription of DNA into RNA using the four ribonucleoside triphosphates as substrates. Largest and catalytic component of RNA polymerase II which synthesizes mRNA precursors and many functional non-coding RNAs. Forms the polymerase active center together with the second largest subunit. Pol II is the central component of the basal RNA polymerase II transcription machinery. It is composed of mobile elements that move relative to each other. RPB1 is part of the core element with the central large cleft, the clamp element that moves to open and close the cleft and the jaws that are thought to grab the incoming DNA template. At the start of transcription, a single-stranded DNA template strand of the promoter is positioned within the central active site cleft of Pol II. A bridging helix emanates from RPB1 and crosses the cleft near the catalytic site and is thought to promote translocation of Pol II by acting as a ratchet that moves the RNA-DNA hybrid through the active site by switching from straight to bent conformations at each step of nucleotide addition. During transcription elongation, Pol II moves on the template as the transcript elongates. Elongation is influenced by the phosphorylation status of the C-terminal domain (CTD) of Pol II largest subunit (RPB1), which serves as a platform for assembly of factors that regulate transcription initiation, elongation, termination and mRNA processing (By similarity).</text>
</comment>
<comment type="catalytic activity">
    <reaction>
        <text>RNA(n) + a ribonucleoside 5'-triphosphate = RNA(n+1) + diphosphate</text>
        <dbReference type="Rhea" id="RHEA:21248"/>
        <dbReference type="Rhea" id="RHEA-COMP:14527"/>
        <dbReference type="Rhea" id="RHEA-COMP:17342"/>
        <dbReference type="ChEBI" id="CHEBI:33019"/>
        <dbReference type="ChEBI" id="CHEBI:61557"/>
        <dbReference type="ChEBI" id="CHEBI:140395"/>
        <dbReference type="EC" id="2.7.7.6"/>
    </reaction>
</comment>
<comment type="subunit">
    <text evidence="3">Component of the RNA polymerase II (Pol II) complex consisting of 12 subunits.</text>
</comment>
<comment type="subcellular location">
    <subcellularLocation>
        <location evidence="2">Nucleus</location>
    </subcellularLocation>
</comment>
<comment type="domain">
    <text evidence="6">The C-terminal domain (CTD) serves as a platform for assembly of factors that regulate transcription initiation, elongation, termination and mRNA processing.</text>
</comment>
<comment type="PTM">
    <text evidence="4">The tandem heptapeptide repeats in the C-terminal domain (CTD) can be highly phosphorylated. The phosphorylation activates Pol II. Phosphorylation occurs mainly at residues 'Ser-2' and 'Ser-5' of the heptapeptide repeat. The phosphorylation state is believed to result from the balanced action of site-specific CTD kinases and phosphatase, and a 'CTD code' that specifies the position of Pol II within the transcription cycle has been proposed.</text>
</comment>
<comment type="PTM">
    <text evidence="2">Following transcription stress, the elongating form of RNA polymerase II (RNA pol IIo) is polyubiquitinated via 'Lys-63'-linkages on Lys-1266 at DNA damage sites without leading to degradation: ubiquitination promotes RNA pol IIo backtracking to allow access by the transcription-coupled nucleotide excision repair (TC-NER) machinery. Subsequent DEF1-dependent polyubiquitination by the elongin complex via 'Lys-48'-linkages may lead to proteasome-mediated degradation; presumably at stalled RNA pol II where TC-NER has failed, to halt global transcription and enable 'last resort' DNA repair pathways.</text>
</comment>
<comment type="similarity">
    <text evidence="6">Belongs to the RNA polymerase beta' chain family.</text>
</comment>